<sequence length="2135" mass="235835">MPSVVALDLCQLFDRSVARTPHQLAVDHESGSLTYTELDVASSNLARKLKQEGVVPGEAVLLLTEHGTRNVVALLAILKAHACYVPLDRSSWSSERIQAVLDGTDSRILINTTVEPFESPRHKVIHLTSADVTTLSTDRSTTKVIPDIAPEDLACLIFTSGSTGVPKGVMIPHRAVANYAQTSPFNMDVQPGDRVLHILSVSFDASTGMLFSILGNSGIVVPATMDTLFDKAQSCSILASTPSILATLPLPTALPDSYPYVHTILLGGESPPAPLLSSWLQFGVRILNAYGPTETTCASLMQEVEVCQETGMINRSIIGRPMPNGPVYLLQPDTLLPVEEEGEEGEIAIAGVGLAHGYYRNAALTAEKFIEWHGKRVYRTGDQGRWTRRNDGQRVVEFRGRSDRTVKNRGFLVNLPADVEEPLRQMGFGVTDVYASLINGLLVALVTPATADLDGLQSEADRRLSSFHRPGRYLAVDQFPLSANGKIDTKAIENMLKEYQARLCEGTDDEETTGGERPTEREQVIAECMYTALGLDLPSASASKDFNFFAMGGNSLAALRFTSLCRERGILLTTRDLYLHPTVRGILPYARDLAHSGLPLPDKEEQIDHRLSLKAEVAAALHLLGDIDVAPLTPLQLQLSAPIFQSDGTNTNQLRQSYPLASAEHICNAWRQVVLSEPVFRTQIALDIGPGVQIVHAQPRCQPQEITFHRREDYNAALSDPSRLPVGLGMRLEFMKFMPNDDDDDEGEVTVVWTAHHSLIDGYSLGLILARVQQASQGVASSRVSSFVDAAWNLLSVQKQRDTEARRFWEQYLQPVRSLTKAEATTTPVARPYLAQEVLFKHVGGVDELHRLASSCSVTLAAVYYTAWAMTIARTTKSTLVTLGVVFSGREILPDDAQAVGPLMATLPLVCRIDGEASIERQLQTTFEGLATISTYAWSAPDQIGYRVDSLLATQYDFPTYDQPIPPQKEQFFENTTFALSLLVEADARFRLVYNPSVHGEQTVQQYADTFQQALQALVGDSTMEAWLTGPTKAPLAVDQASDIQHVNVPNVASAFYASVDLHKDLIAVDGPGGTLPYRELDQKSNAVASHIAKHFSRAQVIAIHADGTLNWVVGILGILKAGCAYCPLDPAYPIARRVAVYEQSGASALLIPNACSSSAALLPITDLRVFTIQETETSDTSRQPSLLANANEDALIVFTSGTTGRPKGVPISHRGLLALQSNPEATMFSRPGRRIAQFMSPAFDYCANEIFSALLHGGTLVLRDPSDPLAHLAKVDVSTITPSVLSVLNPDDYPNLDMVYATGEPVTPGLLARWGEGRAFYNAYGPAECSICTSFTRLEPGQQVTIGNAVRTARMYILDPDLQPVSDGQTGEIFLAGQQVMRGYVGDDAKTAYSVLPDPWHPGERMYRTGDYGYWNADRQIVYIGRLDRQVKIRGFRVELAAVEQKMYQEEPRLTQAAALVVNDTLVAFVMPLDVDVSRLEQRLRESLQPSWVPQVITALEEFPWTANRKVDYRKLAERATLTRPEDSLPQQKTPAGMTAKDASIADGIATLWKNVLRLQAGGGSRKLCEDDDFRALGGHSVLQMMLAARLGSTFGISVSMRDVIEHSTLAEQVELVRRKRQASTAKPRTICDAFPDHCLSPLERQTWFQYLIAADVRTFNIPVLLHLGGTFDRDRLVQSFNAVLASRKIFRTNFVETSLGPCRIFRDTPPRVLVCDGALDTTKEIDRSFDLARDELIRVFLDRRTLLVVTSHAVADLNSVQNLLQDVSGVYAGRTTPTPDRWHYPRAPAWSRQATEQERKFWSKYLEGAPQRLDIPRYPGQMAFEGRSRVSEFKGDLVRRAVTLGQEHGLSQHQLVCAAVAQTLQWLAGSNDVVLGSPWANRGHTVEQESMGLFLDRLPLRFKTPVNADCATILQSTRAASQAAVCNSIPFEQVLNLLHLPRTIRQHPLFEAMVTFHLKGAVEDCLAIEGLEVKREMCFASGAKFLLMFEWTEIEADHWTLRIEYDDHQLDDATVTTIEDSIRCVLEGLADRLSRAAIHERLNAMHKTARTKVDWNFYRRLVGILQREMATCLGVSLDEFPCSVSFFEAGGDSIQAWRLSRQLKRVGLEVPICNIFDHPTAQDLAQRLYRQVL</sequence>
<keyword id="KW-0436">Ligase</keyword>
<keyword id="KW-0596">Phosphopantetheine</keyword>
<keyword id="KW-0597">Phosphoprotein</keyword>
<keyword id="KW-1185">Reference proteome</keyword>
<keyword id="KW-0677">Repeat</keyword>
<keyword id="KW-0843">Virulence</keyword>
<gene>
    <name evidence="19" type="primary">gliP</name>
    <name evidence="20" type="synonym">NRPS10</name>
    <name evidence="21" type="synonym">pesK</name>
    <name type="ORF">AFUA_6G09660</name>
</gene>
<protein>
    <recommendedName>
        <fullName evidence="19">Nonribosomal peptide synthetase gliP</fullName>
        <shortName evidence="19">NRPS gliP</shortName>
        <ecNumber evidence="5">6.3.2.-</ecNumber>
    </recommendedName>
    <alternativeName>
        <fullName evidence="19">Gliotoxin biosynthesis protein P</fullName>
    </alternativeName>
</protein>
<reference key="1">
    <citation type="journal article" date="2005" name="FEMS Microbiol. Lett.">
        <title>Bioinformatic and expression analysis of the putative gliotoxin biosynthetic gene cluster of Aspergillus fumigatus.</title>
        <authorList>
            <person name="Gardiner D.M."/>
            <person name="Howlett B.J."/>
        </authorList>
    </citation>
    <scope>NUCLEOTIDE SEQUENCE [GENOMIC DNA]</scope>
    <scope>FUNCTION</scope>
    <source>
        <strain>ATCC MYA-4609 / CBS 101355 / FGSC A1100 / Af293</strain>
    </source>
</reference>
<reference key="2">
    <citation type="journal article" date="2006" name="Eukaryot. Cell">
        <title>Disruption of a nonribosomal peptide synthetase in Aspergillus fumigatus eliminates gliotoxin production.</title>
        <authorList>
            <person name="Cramer R.A. Jr."/>
            <person name="Gamcsik M.P."/>
            <person name="Brooking R.M."/>
            <person name="Najvar L.K."/>
            <person name="Kirkpatrick W.R."/>
            <person name="Patterson T.F."/>
            <person name="Balibar C.J."/>
            <person name="Graybill J.R."/>
            <person name="Perfect J.R."/>
            <person name="Abraham S.N."/>
            <person name="Steinbach W.J."/>
        </authorList>
    </citation>
    <scope>NUCLEOTIDE SEQUENCE [MRNA]</scope>
    <scope>DISRUPTION PHENOTYPE</scope>
    <scope>FUNCTION</scope>
    <source>
        <strain>ATCC MYA-4609 / CBS 101355 / FGSC A1100 / Af293</strain>
    </source>
</reference>
<reference key="3">
    <citation type="journal article" date="2005" name="Nature">
        <title>Genomic sequence of the pathogenic and allergenic filamentous fungus Aspergillus fumigatus.</title>
        <authorList>
            <person name="Nierman W.C."/>
            <person name="Pain A."/>
            <person name="Anderson M.J."/>
            <person name="Wortman J.R."/>
            <person name="Kim H.S."/>
            <person name="Arroyo J."/>
            <person name="Berriman M."/>
            <person name="Abe K."/>
            <person name="Archer D.B."/>
            <person name="Bermejo C."/>
            <person name="Bennett J.W."/>
            <person name="Bowyer P."/>
            <person name="Chen D."/>
            <person name="Collins M."/>
            <person name="Coulsen R."/>
            <person name="Davies R."/>
            <person name="Dyer P.S."/>
            <person name="Farman M.L."/>
            <person name="Fedorova N."/>
            <person name="Fedorova N.D."/>
            <person name="Feldblyum T.V."/>
            <person name="Fischer R."/>
            <person name="Fosker N."/>
            <person name="Fraser A."/>
            <person name="Garcia J.L."/>
            <person name="Garcia M.J."/>
            <person name="Goble A."/>
            <person name="Goldman G.H."/>
            <person name="Gomi K."/>
            <person name="Griffith-Jones S."/>
            <person name="Gwilliam R."/>
            <person name="Haas B.J."/>
            <person name="Haas H."/>
            <person name="Harris D.E."/>
            <person name="Horiuchi H."/>
            <person name="Huang J."/>
            <person name="Humphray S."/>
            <person name="Jimenez J."/>
            <person name="Keller N."/>
            <person name="Khouri H."/>
            <person name="Kitamoto K."/>
            <person name="Kobayashi T."/>
            <person name="Konzack S."/>
            <person name="Kulkarni R."/>
            <person name="Kumagai T."/>
            <person name="Lafton A."/>
            <person name="Latge J.-P."/>
            <person name="Li W."/>
            <person name="Lord A."/>
            <person name="Lu C."/>
            <person name="Majoros W.H."/>
            <person name="May G.S."/>
            <person name="Miller B.L."/>
            <person name="Mohamoud Y."/>
            <person name="Molina M."/>
            <person name="Monod M."/>
            <person name="Mouyna I."/>
            <person name="Mulligan S."/>
            <person name="Murphy L.D."/>
            <person name="O'Neil S."/>
            <person name="Paulsen I."/>
            <person name="Penalva M.A."/>
            <person name="Pertea M."/>
            <person name="Price C."/>
            <person name="Pritchard B.L."/>
            <person name="Quail M.A."/>
            <person name="Rabbinowitsch E."/>
            <person name="Rawlins N."/>
            <person name="Rajandream M.A."/>
            <person name="Reichard U."/>
            <person name="Renauld H."/>
            <person name="Robson G.D."/>
            <person name="Rodriguez de Cordoba S."/>
            <person name="Rodriguez-Pena J.M."/>
            <person name="Ronning C.M."/>
            <person name="Rutter S."/>
            <person name="Salzberg S.L."/>
            <person name="Sanchez M."/>
            <person name="Sanchez-Ferrero J.C."/>
            <person name="Saunders D."/>
            <person name="Seeger K."/>
            <person name="Squares R."/>
            <person name="Squares S."/>
            <person name="Takeuchi M."/>
            <person name="Tekaia F."/>
            <person name="Turner G."/>
            <person name="Vazquez de Aldana C.R."/>
            <person name="Weidman J."/>
            <person name="White O."/>
            <person name="Woodward J.R."/>
            <person name="Yu J.-H."/>
            <person name="Fraser C.M."/>
            <person name="Galagan J.E."/>
            <person name="Asai K."/>
            <person name="Machida M."/>
            <person name="Hall N."/>
            <person name="Barrell B.G."/>
            <person name="Denning D.W."/>
        </authorList>
    </citation>
    <scope>NUCLEOTIDE SEQUENCE [LARGE SCALE GENOMIC DNA]</scope>
    <source>
        <strain>ATCC MYA-4609 / CBS 101355 / FGSC A1100 / Af293</strain>
    </source>
</reference>
<reference key="4">
    <citation type="journal article" date="2006" name="Biochemistry">
        <title>GliP, a multimodular nonribosomal peptide synthetase in Aspergillus fumigatus, makes the diketopiperazine scaffold of gliotoxin.</title>
        <authorList>
            <person name="Balibar C.J."/>
            <person name="Walsh C.T."/>
        </authorList>
    </citation>
    <scope>DOMAIN</scope>
    <scope>FUNCTION</scope>
    <scope>BIOPHYSICOCHEMICAL PROPERTIES</scope>
    <scope>MUTAGENESIS OF ASP-204; SER-555; ASP-1245 AND SER-1582</scope>
</reference>
<reference key="5">
    <citation type="journal article" date="2006" name="Gene">
        <title>Phylogenomic analysis of non-ribosomal peptide synthetases in the genus Aspergillus.</title>
        <authorList>
            <person name="Cramer R.A. Jr."/>
            <person name="Stajich J.E."/>
            <person name="Yamanaka Y."/>
            <person name="Dietrich F.S."/>
            <person name="Steinbach W.J."/>
            <person name="Perfect J.R."/>
        </authorList>
    </citation>
    <scope>NOMENCLATURE</scope>
</reference>
<reference key="6">
    <citation type="journal article" date="2006" name="Mol. Microbiol.">
        <title>Deletion of the gliP gene of Aspergillus fumigatus results in loss of gliotoxin production but has no effect on virulence of the fungus in a low-dose mouse infection model.</title>
        <authorList>
            <person name="Kupfahl C."/>
            <person name="Heinekamp T."/>
            <person name="Geginat G."/>
            <person name="Ruppert T."/>
            <person name="Hartl A."/>
            <person name="Hof H."/>
            <person name="Brakhage A.A."/>
        </authorList>
    </citation>
    <scope>DISRUPTION PHENOTYPE</scope>
    <scope>FUNCTION</scope>
</reference>
<reference key="7">
    <citation type="journal article" date="2007" name="Eukaryot. Cell">
        <title>Gliotoxin is a virulence factor of Aspergillus fumigatus: gliP deletion attenuates virulence in mice immunosuppressed with hydrocortisone.</title>
        <authorList>
            <person name="Sugui J.A."/>
            <person name="Pardo J."/>
            <person name="Chang Y.C."/>
            <person name="Zarember K.A."/>
            <person name="Nardone G."/>
            <person name="Galvez E.M."/>
            <person name="Mullbacher A."/>
            <person name="Gallin J.I."/>
            <person name="Simon M.M."/>
            <person name="Kwon-Chung K.J."/>
        </authorList>
    </citation>
    <scope>DISRUPTION PHENOTYPE</scope>
    <scope>FUNCTION</scope>
</reference>
<reference key="8">
    <citation type="journal article" date="2007" name="Microbiology">
        <title>Nonribosomal peptide synthesis in Aspergillus fumigatus and other fungi.</title>
        <authorList>
            <person name="Stack D."/>
            <person name="Neville C."/>
            <person name="Doyle S."/>
        </authorList>
    </citation>
    <scope>REVIEW ON FUNCTION</scope>
    <scope>DOMAIN</scope>
</reference>
<reference key="9">
    <citation type="journal article" date="2008" name="J. Infect. Dis.">
        <title>Gliotoxin production in Aspergillus fumigatus contributes to host-specific differences in virulence.</title>
        <authorList>
            <person name="Spikes S."/>
            <person name="Xu R."/>
            <person name="Nguyen C.K."/>
            <person name="Chamilos G."/>
            <person name="Kontoyiannis D.P."/>
            <person name="Jacobson R.H."/>
            <person name="Ejzykowicz D.E."/>
            <person name="Chiang L.Y."/>
            <person name="Filler S.G."/>
            <person name="May G.S."/>
        </authorList>
    </citation>
    <scope>DISRUPTION PHENOTYPE</scope>
    <scope>FUNCTION</scope>
</reference>
<reference key="10">
    <citation type="journal article" date="2010" name="PLoS Pathog.">
        <title>Self-protection against gliotoxin--a component of the gliotoxin biosynthetic cluster, GliT, completely protects Aspergillus fumigatus against exogenous gliotoxin.</title>
        <authorList>
            <person name="Schrettl M."/>
            <person name="Carberry S."/>
            <person name="Kavanagh K."/>
            <person name="Haas H."/>
            <person name="Jones G.W."/>
            <person name="O'Brien J."/>
            <person name="Nolan A."/>
            <person name="Stephens J."/>
            <person name="Fenelon O."/>
            <person name="Doyle S."/>
        </authorList>
    </citation>
    <scope>FUNCTION</scope>
</reference>
<reference key="11">
    <citation type="journal article" date="2011" name="Chem. Biol.">
        <title>The role of glutathione S-transferase GliG in gliotoxin biosynthesis in Aspergillus fumigatus.</title>
        <authorList>
            <person name="Davis C."/>
            <person name="Carberry S."/>
            <person name="Schrettl M."/>
            <person name="Singh I."/>
            <person name="Stephens J.C."/>
            <person name="Barry S.M."/>
            <person name="Kavanagh K."/>
            <person name="Challis G.L."/>
            <person name="Brougham D."/>
            <person name="Doyle S."/>
        </authorList>
    </citation>
    <scope>FUNCTION</scope>
</reference>
<reference key="12">
    <citation type="journal article" date="2011" name="J. Am. Chem. Soc.">
        <title>Identification of cryptic products of the gliotoxin gene cluster using NMR-based comparative metabolomics and a model for gliotoxin biosynthesis.</title>
        <authorList>
            <person name="Forseth R.R."/>
            <person name="Fox E.M."/>
            <person name="Chung D."/>
            <person name="Howlett B.J."/>
            <person name="Keller N.P."/>
            <person name="Schroeder F.C."/>
        </authorList>
    </citation>
    <scope>FUNCTION</scope>
</reference>
<reference key="13">
    <citation type="journal article" date="2011" name="J. Am. Chem. Soc.">
        <title>A dedicated glutathione S-transferase mediates carbon-sulfur bond formation in gliotoxin biosynthesis.</title>
        <authorList>
            <person name="Scharf D.H."/>
            <person name="Remme N."/>
            <person name="Habel A."/>
            <person name="Chankhamjon P."/>
            <person name="Scherlach K."/>
            <person name="Heinekamp T."/>
            <person name="Hortschansky P."/>
            <person name="Brakhage A.A."/>
            <person name="Hertweck C."/>
        </authorList>
    </citation>
    <scope>FUNCTION</scope>
</reference>
<reference key="14">
    <citation type="journal article" date="2012" name="Angew. Chem. Int. Ed.">
        <title>Epidithiol formation by an unprecedented twin carbon-sulfur lyase in the gliotoxin pathway.</title>
        <authorList>
            <person name="Scharf D.H."/>
            <person name="Chankhamjon P."/>
            <person name="Scherlach K."/>
            <person name="Heinekamp T."/>
            <person name="Roth M."/>
            <person name="Brakhage A.A."/>
            <person name="Hertweck C."/>
        </authorList>
    </citation>
    <scope>FUNCTION</scope>
</reference>
<reference key="15">
    <citation type="journal article" date="2012" name="Eukaryot. Cell">
        <title>The Aspergillus fumigatus protein GliK protects against oxidative stress and is essential for gliotoxin biosynthesis.</title>
        <authorList>
            <person name="Gallagher L."/>
            <person name="Owens R.A."/>
            <person name="Dolan S.K."/>
            <person name="O'Keeffe G."/>
            <person name="Schrettl M."/>
            <person name="Kavanagh K."/>
            <person name="Jones G.W."/>
            <person name="Doyle S."/>
        </authorList>
    </citation>
    <scope>FUNCTION</scope>
</reference>
<reference key="16">
    <citation type="journal article" date="2013" name="Angew. Chem. Int. Ed.">
        <title>Epidithiodiketopiperazine biosynthesis: a four-enzyme cascade converts glutathione conjugates into transannular disulfide bridges.</title>
        <authorList>
            <person name="Scharf D.H."/>
            <person name="Chankhamjon P."/>
            <person name="Scherlach K."/>
            <person name="Heinekamp T."/>
            <person name="Willing K."/>
            <person name="Brakhage A.A."/>
            <person name="Hertweck C."/>
        </authorList>
    </citation>
    <scope>FUNCTION</scope>
</reference>
<reference key="17">
    <citation type="journal article" date="2013" name="Bioorg. Med. Chem. Lett.">
        <title>Reconstitution of the early steps of gliotoxin biosynthesis in Aspergillus nidulans reveals the role of the monooxygenase GliC.</title>
        <authorList>
            <person name="Chang S.L."/>
            <person name="Chiang Y.M."/>
            <person name="Yeh H.H."/>
            <person name="Wu T.K."/>
            <person name="Wang C.C."/>
        </authorList>
    </citation>
    <scope>FUNCTION</scope>
    <scope>CATALYTIC ACTIVITY</scope>
</reference>
<reference key="18">
    <citation type="journal article" date="2014" name="J. Am. Chem. Soc.">
        <title>Opposed effects of enzymatic gliotoxin N- and S-methylations.</title>
        <authorList>
            <person name="Scharf D.H."/>
            <person name="Habel A."/>
            <person name="Heinekamp T."/>
            <person name="Brakhage A.A."/>
            <person name="Hertweck C."/>
        </authorList>
    </citation>
    <scope>FUNCTION</scope>
</reference>
<reference key="19">
    <citation type="journal article" date="2015" name="Biochem. Biophys. Res. Commun.">
        <title>Proteomic analyses reveal the key roles of BrlA and AbaA in biogenesis of gliotoxin in Aspergillus fumigatus.</title>
        <authorList>
            <person name="Shin K.S."/>
            <person name="Kim Y.H."/>
            <person name="Yu J.H."/>
        </authorList>
    </citation>
    <scope>INDUCTION</scope>
</reference>
<reference key="20">
    <citation type="journal article" date="2015" name="Eukaryot. Cell">
        <title>Interplay between gliotoxin resistance, secretion, and the methyl/methionine cycle in Aspergillus fumigatus.</title>
        <authorList>
            <person name="Owens R.A."/>
            <person name="O'Keeffe G."/>
            <person name="Smith E.B."/>
            <person name="Dolan S.K."/>
            <person name="Hammel S."/>
            <person name="Sheridan K.J."/>
            <person name="Fitzpatrick D.A."/>
            <person name="Keane T.M."/>
            <person name="Jones G.W."/>
            <person name="Doyle S."/>
        </authorList>
    </citation>
    <scope>FUNCTION</scope>
</reference>
<name>GLIP_ASPFU</name>
<evidence type="ECO:0000255" key="1"/>
<evidence type="ECO:0000255" key="2">
    <source>
        <dbReference type="PROSITE-ProRule" id="PRU00258"/>
    </source>
</evidence>
<evidence type="ECO:0000269" key="3">
    <source>
    </source>
</evidence>
<evidence type="ECO:0000269" key="4">
    <source>
    </source>
</evidence>
<evidence type="ECO:0000269" key="5">
    <source>
    </source>
</evidence>
<evidence type="ECO:0000269" key="6">
    <source>
    </source>
</evidence>
<evidence type="ECO:0000269" key="7">
    <source>
    </source>
</evidence>
<evidence type="ECO:0000269" key="8">
    <source>
    </source>
</evidence>
<evidence type="ECO:0000269" key="9">
    <source>
    </source>
</evidence>
<evidence type="ECO:0000269" key="10">
    <source>
    </source>
</evidence>
<evidence type="ECO:0000269" key="11">
    <source>
    </source>
</evidence>
<evidence type="ECO:0000269" key="12">
    <source>
    </source>
</evidence>
<evidence type="ECO:0000269" key="13">
    <source>
    </source>
</evidence>
<evidence type="ECO:0000269" key="14">
    <source>
    </source>
</evidence>
<evidence type="ECO:0000269" key="15">
    <source>
    </source>
</evidence>
<evidence type="ECO:0000269" key="16">
    <source>
    </source>
</evidence>
<evidence type="ECO:0000269" key="17">
    <source>
    </source>
</evidence>
<evidence type="ECO:0000269" key="18">
    <source>
    </source>
</evidence>
<evidence type="ECO:0000303" key="19">
    <source>
    </source>
</evidence>
<evidence type="ECO:0000303" key="20">
    <source>
    </source>
</evidence>
<evidence type="ECO:0000303" key="21">
    <source>
    </source>
</evidence>
<evidence type="ECO:0000305" key="22"/>
<dbReference type="EC" id="6.3.2.-" evidence="5"/>
<dbReference type="EMBL" id="AY838877">
    <property type="protein sequence ID" value="AAW03307.1"/>
    <property type="status" value="ALT_SEQ"/>
    <property type="molecule type" value="Genomic_DNA"/>
</dbReference>
<dbReference type="EMBL" id="DQ457015">
    <property type="protein sequence ID" value="ABE60889.1"/>
    <property type="molecule type" value="mRNA"/>
</dbReference>
<dbReference type="EMBL" id="AAHF01000006">
    <property type="protein sequence ID" value="EAL88817.1"/>
    <property type="molecule type" value="Genomic_DNA"/>
</dbReference>
<dbReference type="RefSeq" id="XP_750855.1">
    <property type="nucleotide sequence ID" value="XM_745762.1"/>
</dbReference>
<dbReference type="SMR" id="Q4WMJ7"/>
<dbReference type="STRING" id="330879.Q4WMJ7"/>
<dbReference type="EnsemblFungi" id="EAL88817">
    <property type="protein sequence ID" value="EAL88817"/>
    <property type="gene ID" value="AFUA_6G09660"/>
</dbReference>
<dbReference type="GeneID" id="3508160"/>
<dbReference type="KEGG" id="afm:AFUA_6G09660"/>
<dbReference type="VEuPathDB" id="FungiDB:Afu6g09660"/>
<dbReference type="eggNOG" id="KOG1178">
    <property type="taxonomic scope" value="Eukaryota"/>
</dbReference>
<dbReference type="HOGENOM" id="CLU_000022_0_5_1"/>
<dbReference type="InParanoid" id="Q4WMJ7"/>
<dbReference type="OMA" id="NPEATMF"/>
<dbReference type="OrthoDB" id="416786at2759"/>
<dbReference type="BioCyc" id="MetaCyc:MONOMER-18847"/>
<dbReference type="SABIO-RK" id="Q4WMJ7"/>
<dbReference type="Proteomes" id="UP000002530">
    <property type="component" value="Chromosome 6"/>
</dbReference>
<dbReference type="GO" id="GO:0005737">
    <property type="term" value="C:cytoplasm"/>
    <property type="evidence" value="ECO:0000318"/>
    <property type="project" value="GO_Central"/>
</dbReference>
<dbReference type="GO" id="GO:0016874">
    <property type="term" value="F:ligase activity"/>
    <property type="evidence" value="ECO:0007669"/>
    <property type="project" value="UniProtKB-KW"/>
</dbReference>
<dbReference type="GO" id="GO:0031177">
    <property type="term" value="F:phosphopantetheine binding"/>
    <property type="evidence" value="ECO:0000318"/>
    <property type="project" value="GO_Central"/>
</dbReference>
<dbReference type="GO" id="GO:0043041">
    <property type="term" value="P:amino acid activation for nonribosomal peptide biosynthetic process"/>
    <property type="evidence" value="ECO:0000318"/>
    <property type="project" value="GO_Central"/>
</dbReference>
<dbReference type="GO" id="GO:2001310">
    <property type="term" value="P:gliotoxin biosynthetic process"/>
    <property type="evidence" value="ECO:0000315"/>
    <property type="project" value="AspGD"/>
</dbReference>
<dbReference type="GO" id="GO:0043386">
    <property type="term" value="P:mycotoxin biosynthetic process"/>
    <property type="evidence" value="ECO:0000314"/>
    <property type="project" value="AspGD"/>
</dbReference>
<dbReference type="GO" id="GO:0019184">
    <property type="term" value="P:nonribosomal peptide biosynthetic process"/>
    <property type="evidence" value="ECO:0000314"/>
    <property type="project" value="AspGD"/>
</dbReference>
<dbReference type="GO" id="GO:0019748">
    <property type="term" value="P:secondary metabolic process"/>
    <property type="evidence" value="ECO:0000303"/>
    <property type="project" value="AspGD"/>
</dbReference>
<dbReference type="GO" id="GO:0044550">
    <property type="term" value="P:secondary metabolite biosynthetic process"/>
    <property type="evidence" value="ECO:0000318"/>
    <property type="project" value="GO_Central"/>
</dbReference>
<dbReference type="CDD" id="cd17653">
    <property type="entry name" value="A_NRPS_GliP_like"/>
    <property type="match status" value="1"/>
</dbReference>
<dbReference type="CDD" id="cd19537">
    <property type="entry name" value="C_NRPS-like"/>
    <property type="match status" value="1"/>
</dbReference>
<dbReference type="CDD" id="cd19545">
    <property type="entry name" value="FUM14_C_NRPS-like"/>
    <property type="match status" value="1"/>
</dbReference>
<dbReference type="FunFam" id="3.30.559.30:FF:000046">
    <property type="entry name" value="Nonribosomal peptide synthase GliP"/>
    <property type="match status" value="1"/>
</dbReference>
<dbReference type="FunFam" id="3.40.50.12780:FF:000068">
    <property type="entry name" value="Nonribosomal peptide synthase GliP"/>
    <property type="match status" value="1"/>
</dbReference>
<dbReference type="FunFam" id="3.40.50.12780:FF:000062">
    <property type="entry name" value="Nonribosomal peptide synthetase gliP"/>
    <property type="match status" value="1"/>
</dbReference>
<dbReference type="Gene3D" id="3.30.300.30">
    <property type="match status" value="2"/>
</dbReference>
<dbReference type="Gene3D" id="1.10.1200.10">
    <property type="entry name" value="ACP-like"/>
    <property type="match status" value="3"/>
</dbReference>
<dbReference type="Gene3D" id="3.30.559.10">
    <property type="entry name" value="Chloramphenicol acetyltransferase-like domain"/>
    <property type="match status" value="2"/>
</dbReference>
<dbReference type="Gene3D" id="3.40.50.12780">
    <property type="entry name" value="N-terminal domain of ligase-like"/>
    <property type="match status" value="2"/>
</dbReference>
<dbReference type="Gene3D" id="3.30.559.30">
    <property type="entry name" value="Nonribosomal peptide synthetase, condensation domain"/>
    <property type="match status" value="2"/>
</dbReference>
<dbReference type="InterPro" id="IPR010071">
    <property type="entry name" value="AA_adenyl_dom"/>
</dbReference>
<dbReference type="InterPro" id="IPR036736">
    <property type="entry name" value="ACP-like_sf"/>
</dbReference>
<dbReference type="InterPro" id="IPR045851">
    <property type="entry name" value="AMP-bd_C_sf"/>
</dbReference>
<dbReference type="InterPro" id="IPR020845">
    <property type="entry name" value="AMP-binding_CS"/>
</dbReference>
<dbReference type="InterPro" id="IPR000873">
    <property type="entry name" value="AMP-dep_synth/lig_dom"/>
</dbReference>
<dbReference type="InterPro" id="IPR042099">
    <property type="entry name" value="ANL_N_sf"/>
</dbReference>
<dbReference type="InterPro" id="IPR023213">
    <property type="entry name" value="CAT-like_dom_sf"/>
</dbReference>
<dbReference type="InterPro" id="IPR001242">
    <property type="entry name" value="Condensatn"/>
</dbReference>
<dbReference type="InterPro" id="IPR020806">
    <property type="entry name" value="PKS_PP-bd"/>
</dbReference>
<dbReference type="InterPro" id="IPR009081">
    <property type="entry name" value="PP-bd_ACP"/>
</dbReference>
<dbReference type="InterPro" id="IPR006162">
    <property type="entry name" value="Ppantetheine_attach_site"/>
</dbReference>
<dbReference type="NCBIfam" id="TIGR01733">
    <property type="entry name" value="AA-adenyl-dom"/>
    <property type="match status" value="1"/>
</dbReference>
<dbReference type="PANTHER" id="PTHR45527">
    <property type="entry name" value="NONRIBOSOMAL PEPTIDE SYNTHETASE"/>
    <property type="match status" value="1"/>
</dbReference>
<dbReference type="PANTHER" id="PTHR45527:SF11">
    <property type="entry name" value="NONRIBOSOMAL PEPTIDE SYNTHETASE 5"/>
    <property type="match status" value="1"/>
</dbReference>
<dbReference type="Pfam" id="PF00501">
    <property type="entry name" value="AMP-binding"/>
    <property type="match status" value="2"/>
</dbReference>
<dbReference type="Pfam" id="PF00668">
    <property type="entry name" value="Condensation"/>
    <property type="match status" value="2"/>
</dbReference>
<dbReference type="Pfam" id="PF00550">
    <property type="entry name" value="PP-binding"/>
    <property type="match status" value="3"/>
</dbReference>
<dbReference type="SMART" id="SM00823">
    <property type="entry name" value="PKS_PP"/>
    <property type="match status" value="2"/>
</dbReference>
<dbReference type="SUPFAM" id="SSF56801">
    <property type="entry name" value="Acetyl-CoA synthetase-like"/>
    <property type="match status" value="2"/>
</dbReference>
<dbReference type="SUPFAM" id="SSF47336">
    <property type="entry name" value="ACP-like"/>
    <property type="match status" value="3"/>
</dbReference>
<dbReference type="SUPFAM" id="SSF52777">
    <property type="entry name" value="CoA-dependent acyltransferases"/>
    <property type="match status" value="4"/>
</dbReference>
<dbReference type="PROSITE" id="PS00455">
    <property type="entry name" value="AMP_BINDING"/>
    <property type="match status" value="2"/>
</dbReference>
<dbReference type="PROSITE" id="PS50075">
    <property type="entry name" value="CARRIER"/>
    <property type="match status" value="3"/>
</dbReference>
<dbReference type="PROSITE" id="PS00012">
    <property type="entry name" value="PHOSPHOPANTETHEINE"/>
    <property type="match status" value="1"/>
</dbReference>
<accession>Q4WMJ7</accession>
<accession>Q1PBG5</accession>
<accession>Q5MBT9</accession>
<proteinExistence type="evidence at protein level"/>
<feature type="chain" id="PRO_0000416551" description="Nonribosomal peptide synthetase gliP">
    <location>
        <begin position="1"/>
        <end position="2135"/>
    </location>
</feature>
<feature type="domain" description="Carrier 1" evidence="2">
    <location>
        <begin position="519"/>
        <end position="594"/>
    </location>
</feature>
<feature type="domain" description="Carrier 2" evidence="2">
    <location>
        <begin position="1544"/>
        <end position="1622"/>
    </location>
</feature>
<feature type="domain" description="Carrier 3" evidence="2">
    <location>
        <begin position="2061"/>
        <end position="2134"/>
    </location>
</feature>
<feature type="region of interest" description="Adenylation 1" evidence="1">
    <location>
        <begin position="34"/>
        <end position="424"/>
    </location>
</feature>
<feature type="region of interest" description="Condensation 1" evidence="1">
    <location>
        <begin position="663"/>
        <end position="913"/>
    </location>
</feature>
<feature type="region of interest" description="Adenylation 2" evidence="1">
    <location>
        <begin position="1078"/>
        <end position="1458"/>
    </location>
</feature>
<feature type="region of interest" description="Condensation 2" evidence="1">
    <location>
        <begin position="1642"/>
        <end position="1905"/>
    </location>
</feature>
<feature type="modified residue" description="O-(pantetheine 4'-phosphoryl)serine" evidence="2">
    <location>
        <position position="555"/>
    </location>
</feature>
<feature type="modified residue" description="O-(pantetheine 4'-phosphoryl)serine" evidence="2">
    <location>
        <position position="1582"/>
    </location>
</feature>
<feature type="modified residue" description="O-(pantetheine 4'-phosphoryl)serine" evidence="2">
    <location>
        <position position="2095"/>
    </location>
</feature>
<feature type="mutagenesis site" description="Impairs activation of L-phenylalanine." evidence="5">
    <original>D</original>
    <variation>A</variation>
    <location>
        <position position="204"/>
    </location>
</feature>
<feature type="mutagenesis site" description="Impairs loading of L-phenylalanine and formation of the dipeptide." evidence="5">
    <original>S</original>
    <variation>A</variation>
    <location>
        <position position="555"/>
    </location>
</feature>
<feature type="mutagenesis site" description="Impairs activation of L-serine." evidence="5">
    <original>D</original>
    <variation>A</variation>
    <location>
        <position position="1245"/>
    </location>
</feature>
<feature type="mutagenesis site" description="Impairs loading of L-serine and formation of the dipeptide." evidence="5">
    <original>S</original>
    <variation>A</variation>
    <location>
        <position position="1582"/>
    </location>
</feature>
<organism>
    <name type="scientific">Aspergillus fumigatus (strain ATCC MYA-4609 / CBS 101355 / FGSC A1100 / Af293)</name>
    <name type="common">Neosartorya fumigata</name>
    <dbReference type="NCBI Taxonomy" id="330879"/>
    <lineage>
        <taxon>Eukaryota</taxon>
        <taxon>Fungi</taxon>
        <taxon>Dikarya</taxon>
        <taxon>Ascomycota</taxon>
        <taxon>Pezizomycotina</taxon>
        <taxon>Eurotiomycetes</taxon>
        <taxon>Eurotiomycetidae</taxon>
        <taxon>Eurotiales</taxon>
        <taxon>Aspergillaceae</taxon>
        <taxon>Aspergillus</taxon>
        <taxon>Aspergillus subgen. Fumigati</taxon>
    </lineage>
</organism>
<comment type="function">
    <text evidence="3 4 5 7 8 9 10 11 12 13 14 15 16 17">Nonribosomal peptide synthetase; part of the gene cluster that mediates the biosynthesis of gliotoxin, a member of the epipolythiodioxopiperazine (ETP) class of toxins characterized by a disulfide-bridged cyclic dipeptide (PubMed:15979823, PubMed:16757745, PubMed:16956378, PubMed:21612254). The first step in gliotoxin biosynthesis is the condensation of serine and phenylalanine to form the cyclo-L-phenylalanyl-L-serine diketopiperazine (DKP) by the NRPS gliP (PubMed:17154540, PubMed:21612254). GliP is also able to produce the DKP cyclo-L-tryptophanyl-L-serine, suggesting that the substrate specificity of the first adenylation (A) domain in gliP is sufficiently relaxed to accommodate both L-Phe and L-Trp (PubMed:23434416). The cytochrome P450 monooxygenase gliC has been shown to catalyze the subsequent hydroxylation of the alpha-carbon of L-Phe in cyclo-L-phenylalanyl-L-serine whereas the second cytochrome P450 enzyme, gliF, is presumably involved in the modification of the DKP side chain (PubMed:23434416, PubMed:24039048). The glutathione S-transferase (GST) gliG then forms a bis-glutathionylated biosynthetic intermediate which is responsible for the sulfurization of gliotoxin (PubMed:21513890, PubMed:21749092). This bis-glutathionylated intermediate is subsequently processed by the gamma-glutamyl cyclotransferase gliK to remove both gamma-glutamyl moieties (PubMed:22903976, PubMed:24039048). Subsequent processing via gliI yields a biosynthetic intermediate, which is N-methylated via the N-methyltransferase gliN, before the gliotoxin oxidoreductase gliT-mediated disulfide bridge closure (PubMed:20548963, PubMed:22936680, PubMed:24039048, PubMed:25062268). GliN-mediated amide methylation confers stability to ETP, damping the spontaneous formation of tri- and tetrasulfides (PubMed:25062268). Intracellular dithiol gliotoxin oxidized by gliT is subsequently effluxed by gliA (PubMed:26150413). Gliotoxin contributes to pathogenesis during invasive aspergillosis (PubMed:17601876, PubMed:18199036). In macrophages and neutrophils, gliotoxin showed inhibition of various different cell functions including cytokine production, antigen presentation, phagocytosis, and production of reactive oxygen species (PubMed:17601876).</text>
</comment>
<comment type="biophysicochemical properties">
    <kinetics>
        <KM evidence="5">51 uM for L-phenylalanine</KM>
    </kinetics>
</comment>
<comment type="pathway">
    <text evidence="5">Mycotoxin biosynthesis.</text>
</comment>
<comment type="induction">
    <text evidence="18">Expression is positively regulated by the brlA and abaA transcription factors (PubMed:26032501).</text>
</comment>
<comment type="domain">
    <text evidence="5 6">NRP synthetases are composed of discrete domains (adenylation (A), thiolation (T) or peptidyl carrier protein (PCP) and condensation (C) domains) which when grouped together are referred to as a single module (PubMed:17464044). Each module is responsible for the recognition (via the A domain) and incorporation of a single amino acid into the growing peptide product (PubMed:17464044). Thus, an NRP synthetase is generally composed of one or more modules and can terminate in a thioesterase domain (TE) that releases the newly synthesized peptide from the enzyme (PubMed:17464044). Occasionally, epimerase (E) domains (responsible for L- to D-amino acid conversion) are present within the NRP synthetase (PubMed:17464044). GliP has the following architecture: A-T-C-A-T-C-T (PubMed:17154540, PubMed:17464044).</text>
</comment>
<comment type="disruption phenotype">
    <text evidence="3 4 7 8">Impairs gliotoxin production (PubMed:16757745, PubMed:16956378, PubMed:17601876). In vitro, the culture supernatant of the gliP-deficient strains show a reduced cytotoxic effect on both macrophage-like cells and T-cell lines. Shows attenuated virulence in nonneutropenic mice immunosuppressed with corticosteroids, but normal virulence in neutropenic mice (PubMed:18199036). It also has reduced virulence in a Drosophila melanogaster model (PubMed:18199036).</text>
</comment>
<comment type="similarity">
    <text evidence="22">Belongs to the NRP synthetase family.</text>
</comment>
<comment type="sequence caution" evidence="22">
    <conflict type="erroneous gene model prediction">
        <sequence resource="EMBL-CDS" id="AAW03307"/>
    </conflict>
</comment>